<keyword id="KW-0002">3D-structure</keyword>
<keyword id="KW-0007">Acetylation</keyword>
<keyword id="KW-0131">Cell cycle</keyword>
<keyword id="KW-0132">Cell division</keyword>
<keyword id="KW-0963">Cytoplasm</keyword>
<keyword id="KW-0342">GTP-binding</keyword>
<keyword id="KW-0378">Hydrolase</keyword>
<keyword id="KW-1017">Isopeptide bond</keyword>
<keyword id="KW-0460">Magnesium</keyword>
<keyword id="KW-0479">Metal-binding</keyword>
<keyword id="KW-0498">Mitosis</keyword>
<keyword id="KW-0547">Nucleotide-binding</keyword>
<keyword id="KW-0539">Nucleus</keyword>
<keyword id="KW-0597">Phosphoprotein</keyword>
<keyword id="KW-0653">Protein transport</keyword>
<keyword id="KW-1185">Reference proteome</keyword>
<keyword id="KW-0813">Transport</keyword>
<keyword id="KW-0832">Ubl conjugation</keyword>
<name>RAN_CANLF</name>
<accession>P62825</accession>
<accession>P17080</accession>
<accession>P28746</accession>
<accession>P28747</accession>
<accession>Q9CSP3</accession>
<accession>Q9CWI7</accession>
<accession>Q9CZA2</accession>
<accession>Q9UDJ5</accession>
<accession>Q9UEU9</accession>
<dbReference type="EC" id="3.6.5.-" evidence="1"/>
<dbReference type="EMBL" id="Z11922">
    <property type="protein sequence ID" value="CAA77980.1"/>
    <property type="molecule type" value="mRNA"/>
</dbReference>
<dbReference type="PIR" id="JC1455">
    <property type="entry name" value="JC1455"/>
</dbReference>
<dbReference type="RefSeq" id="NP_001181913.1">
    <property type="nucleotide sequence ID" value="NM_001194984.1"/>
</dbReference>
<dbReference type="RefSeq" id="XP_038291993.1">
    <property type="nucleotide sequence ID" value="XM_038436065.1"/>
</dbReference>
<dbReference type="PDB" id="1BYU">
    <property type="method" value="X-ray"/>
    <property type="resolution" value="2.15 A"/>
    <property type="chains" value="A/B=1-216"/>
</dbReference>
<dbReference type="PDB" id="1QG2">
    <property type="method" value="X-ray"/>
    <property type="resolution" value="2.50 A"/>
    <property type="chains" value="A=1-216"/>
</dbReference>
<dbReference type="PDB" id="1QG4">
    <property type="method" value="X-ray"/>
    <property type="resolution" value="2.50 A"/>
    <property type="chains" value="A/B=1-216"/>
</dbReference>
<dbReference type="PDB" id="1WA5">
    <property type="method" value="X-ray"/>
    <property type="resolution" value="2.00 A"/>
    <property type="chains" value="A=1-176"/>
</dbReference>
<dbReference type="PDB" id="2BKU">
    <property type="method" value="X-ray"/>
    <property type="resolution" value="2.70 A"/>
    <property type="chains" value="A/C=1-177"/>
</dbReference>
<dbReference type="PDB" id="3A6P">
    <property type="method" value="X-ray"/>
    <property type="resolution" value="2.92 A"/>
    <property type="chains" value="C/H=1-216"/>
</dbReference>
<dbReference type="PDB" id="3RAN">
    <property type="method" value="X-ray"/>
    <property type="resolution" value="2.15 A"/>
    <property type="chains" value="A/B/C/D=1-216"/>
</dbReference>
<dbReference type="PDB" id="3W3Z">
    <property type="method" value="X-ray"/>
    <property type="resolution" value="2.70 A"/>
    <property type="chains" value="B=1-176"/>
</dbReference>
<dbReference type="PDB" id="5BXQ">
    <property type="method" value="X-ray"/>
    <property type="resolution" value="2.50 A"/>
    <property type="chains" value="C/D/E=1-216"/>
</dbReference>
<dbReference type="PDB" id="5YU6">
    <property type="method" value="X-ray"/>
    <property type="resolution" value="3.00 A"/>
    <property type="chains" value="B/D=1-216"/>
</dbReference>
<dbReference type="PDBsum" id="1BYU"/>
<dbReference type="PDBsum" id="1QG2"/>
<dbReference type="PDBsum" id="1QG4"/>
<dbReference type="PDBsum" id="1WA5"/>
<dbReference type="PDBsum" id="2BKU"/>
<dbReference type="PDBsum" id="3A6P"/>
<dbReference type="PDBsum" id="3RAN"/>
<dbReference type="PDBsum" id="3W3Z"/>
<dbReference type="PDBsum" id="5BXQ"/>
<dbReference type="PDBsum" id="5YU6"/>
<dbReference type="BMRB" id="P62825"/>
<dbReference type="SMR" id="P62825"/>
<dbReference type="BioGRID" id="1530947">
    <property type="interactions" value="2"/>
</dbReference>
<dbReference type="FunCoup" id="P62825">
    <property type="interactions" value="2845"/>
</dbReference>
<dbReference type="IntAct" id="P62825">
    <property type="interactions" value="2"/>
</dbReference>
<dbReference type="STRING" id="9615.ENSCAFP00000009963"/>
<dbReference type="PaxDb" id="9612-ENSCAFP00000009963"/>
<dbReference type="GeneID" id="100499482"/>
<dbReference type="KEGG" id="cfa:100499482"/>
<dbReference type="CTD" id="5901"/>
<dbReference type="eggNOG" id="KOG0096">
    <property type="taxonomic scope" value="Eukaryota"/>
</dbReference>
<dbReference type="InParanoid" id="P62825"/>
<dbReference type="OrthoDB" id="1589at33554"/>
<dbReference type="EvolutionaryTrace" id="P62825"/>
<dbReference type="Proteomes" id="UP000002254">
    <property type="component" value="Unplaced"/>
</dbReference>
<dbReference type="Proteomes" id="UP000694429">
    <property type="component" value="Unplaced"/>
</dbReference>
<dbReference type="Proteomes" id="UP000694542">
    <property type="component" value="Unplaced"/>
</dbReference>
<dbReference type="Proteomes" id="UP000805418">
    <property type="component" value="Unplaced"/>
</dbReference>
<dbReference type="GO" id="GO:0005737">
    <property type="term" value="C:cytoplasm"/>
    <property type="evidence" value="ECO:0000318"/>
    <property type="project" value="GO_Central"/>
</dbReference>
<dbReference type="GO" id="GO:0005829">
    <property type="term" value="C:cytosol"/>
    <property type="evidence" value="ECO:0007669"/>
    <property type="project" value="UniProtKB-SubCell"/>
</dbReference>
<dbReference type="GO" id="GO:0042470">
    <property type="term" value="C:melanosome"/>
    <property type="evidence" value="ECO:0007669"/>
    <property type="project" value="UniProtKB-SubCell"/>
</dbReference>
<dbReference type="GO" id="GO:0005635">
    <property type="term" value="C:nuclear envelope"/>
    <property type="evidence" value="ECO:0007669"/>
    <property type="project" value="UniProtKB-SubCell"/>
</dbReference>
<dbReference type="GO" id="GO:0005634">
    <property type="term" value="C:nucleus"/>
    <property type="evidence" value="ECO:0000250"/>
    <property type="project" value="UniProtKB"/>
</dbReference>
<dbReference type="GO" id="GO:0032991">
    <property type="term" value="C:protein-containing complex"/>
    <property type="evidence" value="ECO:0000314"/>
    <property type="project" value="UniProtKB"/>
</dbReference>
<dbReference type="GO" id="GO:0016442">
    <property type="term" value="C:RISC complex"/>
    <property type="evidence" value="ECO:0000314"/>
    <property type="project" value="UniProtKB"/>
</dbReference>
<dbReference type="GO" id="GO:0005525">
    <property type="term" value="F:GTP binding"/>
    <property type="evidence" value="ECO:0000314"/>
    <property type="project" value="UniProtKB"/>
</dbReference>
<dbReference type="GO" id="GO:0003924">
    <property type="term" value="F:GTPase activity"/>
    <property type="evidence" value="ECO:0000250"/>
    <property type="project" value="UniProtKB"/>
</dbReference>
<dbReference type="GO" id="GO:0000287">
    <property type="term" value="F:magnesium ion binding"/>
    <property type="evidence" value="ECO:0000250"/>
    <property type="project" value="UniProtKB"/>
</dbReference>
<dbReference type="GO" id="GO:0005049">
    <property type="term" value="F:nuclear export signal receptor activity"/>
    <property type="evidence" value="ECO:0000315"/>
    <property type="project" value="UniProtKB"/>
</dbReference>
<dbReference type="GO" id="GO:0070883">
    <property type="term" value="F:pre-miRNA binding"/>
    <property type="evidence" value="ECO:0000303"/>
    <property type="project" value="UniProtKB"/>
</dbReference>
<dbReference type="GO" id="GO:1905172">
    <property type="term" value="F:RISC complex binding"/>
    <property type="evidence" value="ECO:0000314"/>
    <property type="project" value="GO_Central"/>
</dbReference>
<dbReference type="GO" id="GO:0051301">
    <property type="term" value="P:cell division"/>
    <property type="evidence" value="ECO:0007669"/>
    <property type="project" value="UniProtKB-KW"/>
</dbReference>
<dbReference type="GO" id="GO:0046039">
    <property type="term" value="P:GTP metabolic process"/>
    <property type="evidence" value="ECO:0000250"/>
    <property type="project" value="UniProtKB"/>
</dbReference>
<dbReference type="GO" id="GO:0000070">
    <property type="term" value="P:mitotic sister chromatid segregation"/>
    <property type="evidence" value="ECO:0000250"/>
    <property type="project" value="UniProtKB"/>
</dbReference>
<dbReference type="GO" id="GO:0046827">
    <property type="term" value="P:positive regulation of protein export from nucleus"/>
    <property type="evidence" value="ECO:0000315"/>
    <property type="project" value="UniProtKB"/>
</dbReference>
<dbReference type="GO" id="GO:0035281">
    <property type="term" value="P:pre-miRNA export from nucleus"/>
    <property type="evidence" value="ECO:0000303"/>
    <property type="project" value="UniProtKB"/>
</dbReference>
<dbReference type="GO" id="GO:0006611">
    <property type="term" value="P:protein export from nucleus"/>
    <property type="evidence" value="ECO:0000250"/>
    <property type="project" value="UniProtKB"/>
</dbReference>
<dbReference type="GO" id="GO:0006606">
    <property type="term" value="P:protein import into nucleus"/>
    <property type="evidence" value="ECO:0000250"/>
    <property type="project" value="UniProtKB"/>
</dbReference>
<dbReference type="GO" id="GO:0000054">
    <property type="term" value="P:ribosomal subunit export from nucleus"/>
    <property type="evidence" value="ECO:0000318"/>
    <property type="project" value="GO_Central"/>
</dbReference>
<dbReference type="GO" id="GO:0061015">
    <property type="term" value="P:snRNA import into nucleus"/>
    <property type="evidence" value="ECO:0000250"/>
    <property type="project" value="UniProtKB"/>
</dbReference>
<dbReference type="CDD" id="cd00877">
    <property type="entry name" value="Ran"/>
    <property type="match status" value="1"/>
</dbReference>
<dbReference type="FunFam" id="3.40.50.300:FF:000131">
    <property type="entry name" value="GTP-binding nuclear protein Ran"/>
    <property type="match status" value="1"/>
</dbReference>
<dbReference type="Gene3D" id="3.40.50.300">
    <property type="entry name" value="P-loop containing nucleotide triphosphate hydrolases"/>
    <property type="match status" value="1"/>
</dbReference>
<dbReference type="IDEAL" id="IID50081"/>
<dbReference type="InterPro" id="IPR027417">
    <property type="entry name" value="P-loop_NTPase"/>
</dbReference>
<dbReference type="InterPro" id="IPR002041">
    <property type="entry name" value="Ran_GTPase"/>
</dbReference>
<dbReference type="InterPro" id="IPR005225">
    <property type="entry name" value="Small_GTP-bd"/>
</dbReference>
<dbReference type="InterPro" id="IPR001806">
    <property type="entry name" value="Small_GTPase"/>
</dbReference>
<dbReference type="NCBIfam" id="TIGR00231">
    <property type="entry name" value="small_GTP"/>
    <property type="match status" value="1"/>
</dbReference>
<dbReference type="PANTHER" id="PTHR24071:SF0">
    <property type="entry name" value="GTP-BINDING NUCLEAR PROTEIN RAN"/>
    <property type="match status" value="1"/>
</dbReference>
<dbReference type="PANTHER" id="PTHR24071">
    <property type="entry name" value="RAN GTPASE"/>
    <property type="match status" value="1"/>
</dbReference>
<dbReference type="Pfam" id="PF00071">
    <property type="entry name" value="Ras"/>
    <property type="match status" value="1"/>
</dbReference>
<dbReference type="PRINTS" id="PR00627">
    <property type="entry name" value="GTPRANTC4"/>
</dbReference>
<dbReference type="SMART" id="SM00175">
    <property type="entry name" value="RAB"/>
    <property type="match status" value="1"/>
</dbReference>
<dbReference type="SMART" id="SM00176">
    <property type="entry name" value="RAN"/>
    <property type="match status" value="1"/>
</dbReference>
<dbReference type="SMART" id="SM00173">
    <property type="entry name" value="RAS"/>
    <property type="match status" value="1"/>
</dbReference>
<dbReference type="SMART" id="SM00174">
    <property type="entry name" value="RHO"/>
    <property type="match status" value="1"/>
</dbReference>
<dbReference type="SUPFAM" id="SSF52540">
    <property type="entry name" value="P-loop containing nucleoside triphosphate hydrolases"/>
    <property type="match status" value="1"/>
</dbReference>
<dbReference type="PROSITE" id="PS51418">
    <property type="entry name" value="RAN"/>
    <property type="match status" value="1"/>
</dbReference>
<comment type="function">
    <text evidence="1">GTPase involved in nucleocytoplasmic transport, participating both to the import and the export from the nucleus of proteins and RNAs. Switches between a cytoplasmic GDP- and a nuclear GTP-bound state by nucleotide exchange and GTP hydrolysis. Nuclear import receptors such as importin beta bind their substrates only in the absence of GTP-bound RAN and release them upon direct interaction with GTP-bound RAN, while export receptors behave in the opposite way. Thereby, RAN controls cargo loading and release by transport receptors in the proper compartment and ensures the directionality of the transport. Interaction with RANBP1 induces a conformation change in the complex formed by XPO1 and RAN that triggers the release of the nuclear export signal of cargo proteins. RAN (GTP-bound form) triggers microtubule assembly at mitotic chromosomes and is required for normal mitotic spindle assembly and chromosome segregation. Required for normal progress through mitosis. The complex with BIRC5/survivin plays a role in mitotic spindle formation by serving as a physical scaffold to help deliver the RAN effector molecule TPX2 to microtubules. Acts as a negative regulator of the kinase activity of VRK1 and VRK2. Enhances AR-mediated transactivation.</text>
</comment>
<comment type="catalytic activity">
    <reaction evidence="1">
        <text>GTP + H2O = GDP + phosphate + H(+)</text>
        <dbReference type="Rhea" id="RHEA:19669"/>
        <dbReference type="ChEBI" id="CHEBI:15377"/>
        <dbReference type="ChEBI" id="CHEBI:15378"/>
        <dbReference type="ChEBI" id="CHEBI:37565"/>
        <dbReference type="ChEBI" id="CHEBI:43474"/>
        <dbReference type="ChEBI" id="CHEBI:58189"/>
    </reaction>
    <physiologicalReaction direction="left-to-right" evidence="1">
        <dbReference type="Rhea" id="RHEA:19670"/>
    </physiologicalReaction>
</comment>
<comment type="cofactor">
    <cofactor evidence="8">
        <name>Mg(2+)</name>
        <dbReference type="ChEBI" id="CHEBI:18420"/>
    </cofactor>
    <text evidence="8">Mg(2+) interacts primarily with the phosphate groups of the bound guanine nucleotide.</text>
</comment>
<comment type="subunit">
    <text evidence="1 2 5 6 7 10">Monomer. Interacts with RANGAP1, which promotes RAN-mediated GTP hydrolysis. Interacts with KPNB1 (PubMed:15864302). Interaction with KPNB1 inhibits RANGAP1-mediated stimulation of GTPase activity. Interacts with RCC1 which promotes the exchange of RAN-bound GDP by GTP. Interaction with KPNB1 inhibits RCC1-mediated exchange of RAN-bound GDP by GTP. Interacts (GTP-bound form) with TNPO1; the interaction is direct. Interacts (GTP-bound form) with TNPO3; the interaction is direct (By similarity). Interacts with KPNB1 and with TNPO1; both inhibit RAN GTPase activity. Interacts (via C-terminus) with RANBP1, which alleviates the inhibition of RAN GTPase activity. Interacts with RANGRF, which promotes the release of bound guanine nucleotide. RANGRF and RCC1 compete for an overlapping binding site on RAN. Identified in a complex with KPNA2 and CSE1L; interaction with RANBP1 mediates dissociation of RAN from this complex (PubMed:15602554). Interaction with both RANBP1 and KPNA2 promotes dissociation of the complex between RAN and KPNB1. Identified in a complex composed of RAN, RANGAP1 and RANBP1. Identified in a complex that contains TNPO1, RAN and RANBP1. Identified in a nuclear export complex with XPO1. Found in a nuclear export complex with RANBP3 and XPO1. Interacts with RANBP2/NUP358. Interaction with RANBP1 or RANBP2 induces a conformation change in the complex formed by XPO1 and RAN that triggers the release of the nuclear export signal of cargo proteins. Component of a nuclear export receptor complex composed of KPNB1, RAN, SNUPN and XPO1 (By similarity). Found in a nuclear export complex with RAN, XPO5 and pre-miRNA (PubMed:19965479). Interacts (GTP-bound form) with XPO5 (PubMed:19965479). Part of a complex consisting of RANBP9, RAN, DYRK1B and COPS5. Interacts with RANBP9 and RANBP10. Interacts in its GTP-bound form with BIRC5/survivin at S and M phases of the cell cycle. Interacts with TERT; the interaction requires hydrogen peroxide-mediated phosphorylation of TERT and transports TERT to the nucleus. Interacts with MAD2L2. Interacts with VRK1 and VRK3. Interacts with VRK2 (By similarity). Interacts with NEMP1 and KPNB1 (By similarity). Interacts (GDP-bound form) with NUTF2; regulates RAN nuclear import (PubMed:9533885). Interacts with CAPG; mediates CAPG nuclear import. Interacts with NUP153. Interacts with the AR N-terminal poly-Gln region; the interaction with AR is inversely correlated with the poly-Gln length (By similarity). Interacts with MYCBP2, which promotes RAN-mediated GTP hydrolysis (By similarity). Interacts with EPG5 (By similarity).</text>
</comment>
<comment type="subcellular location">
    <subcellularLocation>
        <location evidence="1">Nucleus</location>
    </subcellularLocation>
    <subcellularLocation>
        <location evidence="1">Nucleus envelope</location>
    </subcellularLocation>
    <subcellularLocation>
        <location evidence="1">Cytoplasm</location>
        <location evidence="1">Cytosol</location>
    </subcellularLocation>
    <subcellularLocation>
        <location evidence="1">Cytoplasm</location>
    </subcellularLocation>
    <subcellularLocation>
        <location evidence="1">Melanosome</location>
    </subcellularLocation>
    <text evidence="1">Predominantly nuclear during interphase. Becomes dispersed throughout the cytoplasm during mitosis (By similarity). Identified by mass spectrometry in melanosome fractions from stage I to stage IV (By similarity).</text>
</comment>
<comment type="PTM">
    <text evidence="1">Acetylation by KAT5 at Lys-134 is increased during mitosis, impairs RANGRF binding and enhances RCC1 binding. Acetylation at Lys-37 enhances the association with nuclear export components. Deacetylation of Lys-37 by SIRT7 regulates the nuclear export of NF-kappa-B subunit RELA/p65.</text>
</comment>
<comment type="similarity">
    <text evidence="3 9">Belongs to the small GTPase superfamily. Ran family.</text>
</comment>
<protein>
    <recommendedName>
        <fullName>GTP-binding nuclear protein Ran</fullName>
        <ecNumber evidence="1">3.6.5.-</ecNumber>
    </recommendedName>
    <alternativeName>
        <fullName>GTPase Ran</fullName>
    </alternativeName>
    <alternativeName>
        <fullName>Ras-like protein TC4</fullName>
    </alternativeName>
    <alternativeName>
        <fullName>Ras-related nuclear protein</fullName>
    </alternativeName>
</protein>
<reference key="1">
    <citation type="journal article" date="1992" name="Gene">
        <title>Sequence of a canine cDNA clone encoding a Ran/TC4 GTP-binding protein.</title>
        <authorList>
            <person name="Dupree P."/>
            <person name="Olkkonen V.M."/>
            <person name="Chavrier P."/>
        </authorList>
    </citation>
    <scope>NUCLEOTIDE SEQUENCE [MRNA]</scope>
    <source>
        <strain>Cocker spaniel</strain>
        <tissue>Kidney</tissue>
    </source>
</reference>
<reference evidence="17" key="2">
    <citation type="journal article" date="1998" name="J. Mol. Biol.">
        <title>Structural basis for molecular recognition between nuclear transport factor 2 (NTF2) and the GDP-bound form of the Ras-family GTPase Ran.</title>
        <authorList>
            <person name="Stewart M."/>
            <person name="Kent H.M."/>
            <person name="McCoy A.J."/>
        </authorList>
    </citation>
    <scope>X-RAY CRYSTALLOGRAPHY (2.5 ANGSTROMS) IN COMPLEX WITH GDP AND NUTF2</scope>
</reference>
<reference evidence="11 15" key="3">
    <citation type="journal article" date="1998" name="J. Mol. Biol.">
        <title>The structure of the Q69L mutant of GDP-Ran shows a major conformational change in the switch II loop that accounts for its failure to bind nuclear transport factor 2 (NTF2).</title>
        <authorList>
            <person name="Stewart M."/>
            <person name="Kent H.M."/>
            <person name="McCoy A.J."/>
        </authorList>
    </citation>
    <scope>X-RAY CRYSTALLOGRAPHY (2.15 ANGSTROMS) OF MUTANT LEU-69 IN COMPLEX WITH GDP AND MAGNESIUM</scope>
    <scope>COFACTOR</scope>
</reference>
<reference evidence="12" key="4">
    <citation type="journal article" date="2004" name="Nature">
        <title>Structural basis for the assembly of a nuclear export complex.</title>
        <authorList>
            <person name="Matsuura Y."/>
            <person name="Stewart M."/>
        </authorList>
    </citation>
    <scope>X-RAY CRYSTALLOGRAPHY (2.00 ANGSTROMS) OF 1-176 IN COMPLEX WITH GTP AND YEAST ORTHOLOGS OF CSE1L AND KPNA2</scope>
    <scope>SUBUNIT</scope>
</reference>
<reference evidence="13" key="5">
    <citation type="journal article" date="2005" name="Nature">
        <title>Structural basis for nuclear import complex dissociation by RanGTP.</title>
        <authorList>
            <person name="Lee S.J."/>
            <person name="Matsuura Y."/>
            <person name="Liu S.M."/>
            <person name="Stewart M."/>
        </authorList>
    </citation>
    <scope>X-RAY CRYSTALLOGRAPHY (2.70 ANGSTROMS) OF 1-177 IN COMPLEX WITH GTP AND YEAST KPNB1 HOMOLOG</scope>
    <scope>INTERACTION WITH HUMAN KPNB1</scope>
</reference>
<reference evidence="14" key="6">
    <citation type="journal article" date="2009" name="Science">
        <title>A high-resolution structure of the pre-microRNA nuclear export machinery.</title>
        <authorList>
            <person name="Okada C."/>
            <person name="Yamashita E."/>
            <person name="Lee S.J."/>
            <person name="Shibata S."/>
            <person name="Katahira J."/>
            <person name="Nakagawa A."/>
            <person name="Yoneda Y."/>
            <person name="Tsukihara T."/>
        </authorList>
    </citation>
    <scope>X-RAY CRYSTALLOGRAPHY (2.92 ANGSTROMS) IN COMPLEX WITH HUMAN XPO5; PRE-MIRNA AND GTP</scope>
    <scope>INTERACTION WITH HUMAN XPO5</scope>
</reference>
<reference evidence="16" key="7">
    <citation type="journal article" date="2013" name="J. Mol. Biol.">
        <title>Structural basis for cell-cycle-dependent nuclear import mediated by the karyopherin Kap121p.</title>
        <authorList>
            <person name="Kobayashi J."/>
            <person name="Matsuura Y."/>
        </authorList>
    </citation>
    <scope>X-RAY CRYSTALLOGRAPHY (2.70 ANGSTROMS) OF 1-176 IN COMPLEX WITH GTP AND YEAST IMPORTIN PSE1</scope>
</reference>
<proteinExistence type="evidence at protein level"/>
<organism>
    <name type="scientific">Canis lupus familiaris</name>
    <name type="common">Dog</name>
    <name type="synonym">Canis familiaris</name>
    <dbReference type="NCBI Taxonomy" id="9615"/>
    <lineage>
        <taxon>Eukaryota</taxon>
        <taxon>Metazoa</taxon>
        <taxon>Chordata</taxon>
        <taxon>Craniata</taxon>
        <taxon>Vertebrata</taxon>
        <taxon>Euteleostomi</taxon>
        <taxon>Mammalia</taxon>
        <taxon>Eutheria</taxon>
        <taxon>Laurasiatheria</taxon>
        <taxon>Carnivora</taxon>
        <taxon>Caniformia</taxon>
        <taxon>Canidae</taxon>
        <taxon>Canis</taxon>
    </lineage>
</organism>
<gene>
    <name type="primary">RAN</name>
</gene>
<sequence>MAAQGEPQVQFKLVLVGDGGTGKTTFVKRHLTGEFEKKYVATLGVEVHPLVFHTNRGPIKFNVWDTAGQEKFGGLRDGYYIQAQCAIIMFDVTSRVTYKNVPNWHRDLVRVCENIPIVLCGNKVDIKDRKVKAKSIVFHRKKNLQYYDISAKSNYNFEKPFLWLARKLIGDPNLEFVAMPALAPPEVVMDPALAAQYEHDLEVAQTTALPDEDDDL</sequence>
<evidence type="ECO:0000250" key="1">
    <source>
        <dbReference type="UniProtKB" id="P62826"/>
    </source>
</evidence>
<evidence type="ECO:0000250" key="2">
    <source>
        <dbReference type="UniProtKB" id="P62827"/>
    </source>
</evidence>
<evidence type="ECO:0000255" key="3">
    <source>
        <dbReference type="PROSITE-ProRule" id="PRU00752"/>
    </source>
</evidence>
<evidence type="ECO:0000269" key="4">
    <source>
    </source>
</evidence>
<evidence type="ECO:0000269" key="5">
    <source>
    </source>
</evidence>
<evidence type="ECO:0000269" key="6">
    <source>
    </source>
</evidence>
<evidence type="ECO:0000269" key="7">
    <source>
    </source>
</evidence>
<evidence type="ECO:0000269" key="8">
    <source>
    </source>
</evidence>
<evidence type="ECO:0000305" key="9"/>
<evidence type="ECO:0000305" key="10">
    <source>
    </source>
</evidence>
<evidence type="ECO:0007744" key="11">
    <source>
        <dbReference type="PDB" id="1BYU"/>
    </source>
</evidence>
<evidence type="ECO:0007744" key="12">
    <source>
        <dbReference type="PDB" id="1WA5"/>
    </source>
</evidence>
<evidence type="ECO:0007744" key="13">
    <source>
        <dbReference type="PDB" id="2BKU"/>
    </source>
</evidence>
<evidence type="ECO:0007744" key="14">
    <source>
        <dbReference type="PDB" id="3A6P"/>
    </source>
</evidence>
<evidence type="ECO:0007744" key="15">
    <source>
        <dbReference type="PDB" id="3RAN"/>
    </source>
</evidence>
<evidence type="ECO:0007744" key="16">
    <source>
        <dbReference type="PDB" id="3W3Z"/>
    </source>
</evidence>
<evidence type="ECO:0007744" key="17">
    <source>
        <dbReference type="PDB" id="5BXQ"/>
    </source>
</evidence>
<evidence type="ECO:0007829" key="18">
    <source>
        <dbReference type="PDB" id="1BYU"/>
    </source>
</evidence>
<evidence type="ECO:0007829" key="19">
    <source>
        <dbReference type="PDB" id="1WA5"/>
    </source>
</evidence>
<evidence type="ECO:0007829" key="20">
    <source>
        <dbReference type="PDB" id="3RAN"/>
    </source>
</evidence>
<feature type="initiator methionine" description="Removed" evidence="1">
    <location>
        <position position="1"/>
    </location>
</feature>
<feature type="chain" id="PRO_0000208695" description="GTP-binding nuclear protein Ran">
    <location>
        <begin position="2"/>
        <end position="216"/>
    </location>
</feature>
<feature type="domain" description="Small GTPase Ran-type" evidence="3">
    <location>
        <begin position="7"/>
        <end position="171"/>
    </location>
</feature>
<feature type="region of interest" description="Switch-I" evidence="3">
    <location>
        <begin position="37"/>
        <end position="45"/>
    </location>
</feature>
<feature type="region of interest" description="Switch-II" evidence="3">
    <location>
        <begin position="68"/>
        <end position="84"/>
    </location>
</feature>
<feature type="region of interest" description="Interaction with RANBP1" evidence="1">
    <location>
        <begin position="211"/>
        <end position="216"/>
    </location>
</feature>
<feature type="binding site" evidence="4 5 6 7 8 11 12 13 14 15 16 17">
    <location>
        <begin position="18"/>
        <end position="25"/>
    </location>
    <ligand>
        <name>GTP</name>
        <dbReference type="ChEBI" id="CHEBI:37565"/>
    </ligand>
</feature>
<feature type="binding site" evidence="4 5 6 12 13 14 16">
    <location>
        <begin position="36"/>
        <end position="42"/>
    </location>
    <ligand>
        <name>GTP</name>
        <dbReference type="ChEBI" id="CHEBI:37565"/>
    </ligand>
</feature>
<feature type="binding site" evidence="4 5 6 12 13 16">
    <location>
        <position position="68"/>
    </location>
    <ligand>
        <name>GTP</name>
        <dbReference type="ChEBI" id="CHEBI:37565"/>
    </ligand>
</feature>
<feature type="binding site" evidence="4 5 6 7 8 11 12 13 14 15 16 17">
    <location>
        <begin position="122"/>
        <end position="125"/>
    </location>
    <ligand>
        <name>GTP</name>
        <dbReference type="ChEBI" id="CHEBI:37565"/>
    </ligand>
</feature>
<feature type="binding site" evidence="4 5 6 7 8 11 12 13 14 15 16 17">
    <location>
        <begin position="150"/>
        <end position="152"/>
    </location>
    <ligand>
        <name>GTP</name>
        <dbReference type="ChEBI" id="CHEBI:37565"/>
    </ligand>
</feature>
<feature type="site" description="Essential for GTP hydrolysis" evidence="1">
    <location>
        <position position="69"/>
    </location>
</feature>
<feature type="modified residue" description="N-acetylalanine" evidence="1">
    <location>
        <position position="2"/>
    </location>
</feature>
<feature type="modified residue" description="Phosphothreonine" evidence="1">
    <location>
        <position position="24"/>
    </location>
</feature>
<feature type="modified residue" description="N6-acetyllysine" evidence="1">
    <location>
        <position position="37"/>
    </location>
</feature>
<feature type="modified residue" description="N6-acetyllysine" evidence="1">
    <location>
        <position position="60"/>
    </location>
</feature>
<feature type="modified residue" description="N6-acetyllysine; alternate" evidence="1">
    <location>
        <position position="71"/>
    </location>
</feature>
<feature type="modified residue" description="N6-acetyllysine" evidence="1">
    <location>
        <position position="99"/>
    </location>
</feature>
<feature type="modified residue" description="N6-acetyllysine" evidence="1">
    <location>
        <position position="134"/>
    </location>
</feature>
<feature type="modified residue" description="N6-acetyllysine; alternate" evidence="1">
    <location>
        <position position="159"/>
    </location>
</feature>
<feature type="modified residue" description="N6-succinyllysine; alternate" evidence="2">
    <location>
        <position position="159"/>
    </location>
</feature>
<feature type="cross-link" description="Glycyl lysine isopeptide (Lys-Gly) (interchain with G-Cter in SUMO2); alternate" evidence="1">
    <location>
        <position position="71"/>
    </location>
</feature>
<feature type="cross-link" description="Glycyl lysine isopeptide (Lys-Gly) (interchain with G-Cter in ubiquitin); alternate" evidence="1">
    <location>
        <position position="71"/>
    </location>
</feature>
<feature type="cross-link" description="Glycyl lysine isopeptide (Lys-Gly) (interchain with G-Cter in SUMO2)" evidence="1">
    <location>
        <position position="152"/>
    </location>
</feature>
<feature type="turn" evidence="18">
    <location>
        <begin position="3"/>
        <end position="5"/>
    </location>
</feature>
<feature type="strand" evidence="19">
    <location>
        <begin position="9"/>
        <end position="18"/>
    </location>
</feature>
<feature type="helix" evidence="19">
    <location>
        <begin position="23"/>
        <end position="32"/>
    </location>
</feature>
<feature type="strand" evidence="18">
    <location>
        <begin position="38"/>
        <end position="40"/>
    </location>
</feature>
<feature type="helix" evidence="20">
    <location>
        <begin position="41"/>
        <end position="43"/>
    </location>
</feature>
<feature type="strand" evidence="19">
    <location>
        <begin position="44"/>
        <end position="54"/>
    </location>
</feature>
<feature type="strand" evidence="19">
    <location>
        <begin position="57"/>
        <end position="66"/>
    </location>
</feature>
<feature type="helix" evidence="19">
    <location>
        <begin position="70"/>
        <end position="72"/>
    </location>
</feature>
<feature type="helix" evidence="19">
    <location>
        <begin position="76"/>
        <end position="80"/>
    </location>
</feature>
<feature type="strand" evidence="19">
    <location>
        <begin position="85"/>
        <end position="91"/>
    </location>
</feature>
<feature type="helix" evidence="19">
    <location>
        <begin position="95"/>
        <end position="99"/>
    </location>
</feature>
<feature type="helix" evidence="19">
    <location>
        <begin position="101"/>
        <end position="111"/>
    </location>
</feature>
<feature type="strand" evidence="19">
    <location>
        <begin position="112"/>
        <end position="114"/>
    </location>
</feature>
<feature type="strand" evidence="19">
    <location>
        <begin position="117"/>
        <end position="122"/>
    </location>
</feature>
<feature type="strand" evidence="18">
    <location>
        <begin position="126"/>
        <end position="128"/>
    </location>
</feature>
<feature type="turn" evidence="19">
    <location>
        <begin position="133"/>
        <end position="135"/>
    </location>
</feature>
<feature type="helix" evidence="19">
    <location>
        <begin position="138"/>
        <end position="142"/>
    </location>
</feature>
<feature type="strand" evidence="19">
    <location>
        <begin position="145"/>
        <end position="148"/>
    </location>
</feature>
<feature type="turn" evidence="19">
    <location>
        <begin position="151"/>
        <end position="153"/>
    </location>
</feature>
<feature type="turn" evidence="19">
    <location>
        <begin position="155"/>
        <end position="158"/>
    </location>
</feature>
<feature type="helix" evidence="19">
    <location>
        <begin position="159"/>
        <end position="169"/>
    </location>
</feature>
<feature type="strand" evidence="18">
    <location>
        <begin position="176"/>
        <end position="178"/>
    </location>
</feature>
<feature type="helix" evidence="18">
    <location>
        <begin position="191"/>
        <end position="205"/>
    </location>
</feature>